<gene>
    <name type="ORF">PAAG_01970</name>
</gene>
<sequence>MIRQCLSRRAAYPCYRIVAGGTEPTGCLYPQSCRISRRGRDWSSTSRRAIDTQTSGASNGADYVPLRQQLKEQARAKRAAKRKGEVSPPEHEDWELTVGIEIHAQLDTDTKLFSRASAAIDDVPNSNVALFDVALPGSQPLFQPATLIPALRAAIALNCDVQRVSRFDRKHYFYQDQPAGYQITQYYEPYAKNGSIWLGSHDGIAKEDGVGVEIGIKQIQMEQDTAKSQELPSSTYLLDFNRVSRPLIEIITLPQIHSPATAAACVRKIQTILQSVGAVTTGMEMGGLRADVNVSVRKRSEGVGDHQYHGVTGLGQRTEIKNLSSFKAVEDAIIAERDRQIAVLRAGGAIEGETRGWTLGSTETRKLRGKEGEVDYRYMPDPDLGPVIIGYDVLCELKAKLPVLPDALLHNLVQDPKYGLSIDDAKTLIELDDGDRLDYYKDAVDILVTLQKDLSDDFSGGKVVGNWVLHELGGLLTKSNLHWDSERVPAQSLAEIINLLSRNKITGSTAKSLFAMVFDGDKRSIGQIVEDENLLLQSLSREEYIALAEEVMRQNPKMVMEICEKRQLGKIGWLVGQIKRIGDRNRVEAQKAEEILRELILK</sequence>
<evidence type="ECO:0000255" key="1">
    <source>
        <dbReference type="HAMAP-Rule" id="MF_03147"/>
    </source>
</evidence>
<comment type="function">
    <text evidence="1">Allows the formation of correctly charged Gln-tRNA(Gln) through the transamidation of misacylated Glu-tRNA(Gln) in the mitochondria. The reaction takes place in the presence of glutamine and ATP through an activated gamma-phospho-Glu-tRNA(Gln).</text>
</comment>
<comment type="catalytic activity">
    <reaction evidence="1">
        <text>L-glutamyl-tRNA(Gln) + L-glutamine + ATP + H2O = L-glutaminyl-tRNA(Gln) + L-glutamate + ADP + phosphate + H(+)</text>
        <dbReference type="Rhea" id="RHEA:17521"/>
        <dbReference type="Rhea" id="RHEA-COMP:9681"/>
        <dbReference type="Rhea" id="RHEA-COMP:9684"/>
        <dbReference type="ChEBI" id="CHEBI:15377"/>
        <dbReference type="ChEBI" id="CHEBI:15378"/>
        <dbReference type="ChEBI" id="CHEBI:29985"/>
        <dbReference type="ChEBI" id="CHEBI:30616"/>
        <dbReference type="ChEBI" id="CHEBI:43474"/>
        <dbReference type="ChEBI" id="CHEBI:58359"/>
        <dbReference type="ChEBI" id="CHEBI:78520"/>
        <dbReference type="ChEBI" id="CHEBI:78521"/>
        <dbReference type="ChEBI" id="CHEBI:456216"/>
    </reaction>
</comment>
<comment type="subunit">
    <text evidence="1">Subunit of the heterotrimeric GatCAB amidotransferase (AdT) complex, composed of A, B and C subunits.</text>
</comment>
<comment type="subcellular location">
    <subcellularLocation>
        <location evidence="1">Mitochondrion</location>
    </subcellularLocation>
</comment>
<comment type="miscellaneous">
    <text evidence="1">This protein may be expected to contain an N-terminal transit peptide but none has been predicted.</text>
</comment>
<comment type="similarity">
    <text evidence="1">Belongs to the GatB/GatE family. GatB subfamily.</text>
</comment>
<keyword id="KW-0067">ATP-binding</keyword>
<keyword id="KW-0436">Ligase</keyword>
<keyword id="KW-0496">Mitochondrion</keyword>
<keyword id="KW-0547">Nucleotide-binding</keyword>
<keyword id="KW-0648">Protein biosynthesis</keyword>
<keyword id="KW-1185">Reference proteome</keyword>
<dbReference type="EC" id="6.3.5.-" evidence="1"/>
<dbReference type="EMBL" id="KN293995">
    <property type="protein sequence ID" value="EEH39781.2"/>
    <property type="molecule type" value="Genomic_DNA"/>
</dbReference>
<dbReference type="RefSeq" id="XP_002796082.2">
    <property type="nucleotide sequence ID" value="XM_002796036.2"/>
</dbReference>
<dbReference type="SMR" id="C1GTX5"/>
<dbReference type="STRING" id="502779.C1GTX5"/>
<dbReference type="GeneID" id="9099528"/>
<dbReference type="KEGG" id="pbl:PAAG_01970"/>
<dbReference type="VEuPathDB" id="FungiDB:PAAG_01970"/>
<dbReference type="eggNOG" id="KOG2438">
    <property type="taxonomic scope" value="Eukaryota"/>
</dbReference>
<dbReference type="HOGENOM" id="CLU_019240_4_1_1"/>
<dbReference type="OMA" id="ARKWWMG"/>
<dbReference type="OrthoDB" id="1722066at2759"/>
<dbReference type="Proteomes" id="UP000002059">
    <property type="component" value="Partially assembled WGS sequence"/>
</dbReference>
<dbReference type="GO" id="GO:0030956">
    <property type="term" value="C:glutamyl-tRNA(Gln) amidotransferase complex"/>
    <property type="evidence" value="ECO:0007669"/>
    <property type="project" value="UniProtKB-UniRule"/>
</dbReference>
<dbReference type="GO" id="GO:0005739">
    <property type="term" value="C:mitochondrion"/>
    <property type="evidence" value="ECO:0007669"/>
    <property type="project" value="UniProtKB-SubCell"/>
</dbReference>
<dbReference type="GO" id="GO:0005524">
    <property type="term" value="F:ATP binding"/>
    <property type="evidence" value="ECO:0007669"/>
    <property type="project" value="UniProtKB-KW"/>
</dbReference>
<dbReference type="GO" id="GO:0050567">
    <property type="term" value="F:glutaminyl-tRNA synthase (glutamine-hydrolyzing) activity"/>
    <property type="evidence" value="ECO:0007669"/>
    <property type="project" value="UniProtKB-UniRule"/>
</dbReference>
<dbReference type="GO" id="GO:0070681">
    <property type="term" value="P:glutaminyl-tRNAGln biosynthesis via transamidation"/>
    <property type="evidence" value="ECO:0007669"/>
    <property type="project" value="UniProtKB-UniRule"/>
</dbReference>
<dbReference type="GO" id="GO:0032543">
    <property type="term" value="P:mitochondrial translation"/>
    <property type="evidence" value="ECO:0007669"/>
    <property type="project" value="UniProtKB-UniRule"/>
</dbReference>
<dbReference type="HAMAP" id="MF_00121">
    <property type="entry name" value="GatB"/>
    <property type="match status" value="1"/>
</dbReference>
<dbReference type="InterPro" id="IPR017959">
    <property type="entry name" value="Asn/Gln-tRNA_amidoTrfase_suB/E"/>
</dbReference>
<dbReference type="InterPro" id="IPR006075">
    <property type="entry name" value="Asn/Gln-tRNA_Trfase_suB/E_cat"/>
</dbReference>
<dbReference type="InterPro" id="IPR018027">
    <property type="entry name" value="Asn/Gln_amidotransferase"/>
</dbReference>
<dbReference type="InterPro" id="IPR003789">
    <property type="entry name" value="Asn/Gln_tRNA_amidoTrase-B-like"/>
</dbReference>
<dbReference type="InterPro" id="IPR004413">
    <property type="entry name" value="GatB"/>
</dbReference>
<dbReference type="InterPro" id="IPR017958">
    <property type="entry name" value="Gln-tRNA_amidoTrfase_suB_CS"/>
</dbReference>
<dbReference type="InterPro" id="IPR014746">
    <property type="entry name" value="Gln_synth/guanido_kin_cat_dom"/>
</dbReference>
<dbReference type="NCBIfam" id="TIGR00133">
    <property type="entry name" value="gatB"/>
    <property type="match status" value="1"/>
</dbReference>
<dbReference type="NCBIfam" id="NF004012">
    <property type="entry name" value="PRK05477.1-2"/>
    <property type="match status" value="1"/>
</dbReference>
<dbReference type="PANTHER" id="PTHR11659">
    <property type="entry name" value="GLUTAMYL-TRNA GLN AMIDOTRANSFERASE SUBUNIT B MITOCHONDRIAL AND PROKARYOTIC PET112-RELATED"/>
    <property type="match status" value="1"/>
</dbReference>
<dbReference type="PANTHER" id="PTHR11659:SF0">
    <property type="entry name" value="GLUTAMYL-TRNA(GLN) AMIDOTRANSFERASE SUBUNIT B, MITOCHONDRIAL"/>
    <property type="match status" value="1"/>
</dbReference>
<dbReference type="Pfam" id="PF02934">
    <property type="entry name" value="GatB_N"/>
    <property type="match status" value="1"/>
</dbReference>
<dbReference type="Pfam" id="PF02637">
    <property type="entry name" value="GatB_Yqey"/>
    <property type="match status" value="1"/>
</dbReference>
<dbReference type="SMART" id="SM00845">
    <property type="entry name" value="GatB_Yqey"/>
    <property type="match status" value="1"/>
</dbReference>
<dbReference type="SUPFAM" id="SSF89095">
    <property type="entry name" value="GatB/YqeY motif"/>
    <property type="match status" value="1"/>
</dbReference>
<dbReference type="SUPFAM" id="SSF55931">
    <property type="entry name" value="Glutamine synthetase/guanido kinase"/>
    <property type="match status" value="1"/>
</dbReference>
<dbReference type="PROSITE" id="PS01234">
    <property type="entry name" value="GATB"/>
    <property type="match status" value="1"/>
</dbReference>
<proteinExistence type="inferred from homology"/>
<name>GATB_PARBA</name>
<protein>
    <recommendedName>
        <fullName evidence="1">Glutamyl-tRNA(Gln) amidotransferase subunit B, mitochondrial</fullName>
        <shortName evidence="1">Glu-AdT subunit B</shortName>
        <ecNumber evidence="1">6.3.5.-</ecNumber>
    </recommendedName>
</protein>
<accession>C1GTX5</accession>
<reference key="1">
    <citation type="journal article" date="2011" name="PLoS Genet.">
        <title>Comparative genomic analysis of human fungal pathogens causing paracoccidioidomycosis.</title>
        <authorList>
            <person name="Desjardins C.A."/>
            <person name="Champion M.D."/>
            <person name="Holder J.W."/>
            <person name="Muszewska A."/>
            <person name="Goldberg J."/>
            <person name="Bailao A.M."/>
            <person name="Brigido M.M."/>
            <person name="Ferreira M.E."/>
            <person name="Garcia A.M."/>
            <person name="Grynberg M."/>
            <person name="Gujja S."/>
            <person name="Heiman D.I."/>
            <person name="Henn M.R."/>
            <person name="Kodira C.D."/>
            <person name="Leon-Narvaez H."/>
            <person name="Longo L.V.G."/>
            <person name="Ma L.-J."/>
            <person name="Malavazi I."/>
            <person name="Matsuo A.L."/>
            <person name="Morais F.V."/>
            <person name="Pereira M."/>
            <person name="Rodriguez-Brito S."/>
            <person name="Sakthikumar S."/>
            <person name="Salem-Izacc S.M."/>
            <person name="Sykes S.M."/>
            <person name="Teixeira M.M."/>
            <person name="Vallejo M.C."/>
            <person name="Walter M.E."/>
            <person name="Yandava C."/>
            <person name="Young S."/>
            <person name="Zeng Q."/>
            <person name="Zucker J."/>
            <person name="Felipe M.S."/>
            <person name="Goldman G.H."/>
            <person name="Haas B.J."/>
            <person name="McEwen J.G."/>
            <person name="Nino-Vega G."/>
            <person name="Puccia R."/>
            <person name="San-Blas G."/>
            <person name="Soares C.M."/>
            <person name="Birren B.W."/>
            <person name="Cuomo C.A."/>
        </authorList>
    </citation>
    <scope>NUCLEOTIDE SEQUENCE [LARGE SCALE GENOMIC DNA]</scope>
    <source>
        <strain>ATCC MYA-826 / Pb01</strain>
    </source>
</reference>
<organism>
    <name type="scientific">Paracoccidioides lutzii (strain ATCC MYA-826 / Pb01)</name>
    <name type="common">Paracoccidioides brasiliensis</name>
    <dbReference type="NCBI Taxonomy" id="502779"/>
    <lineage>
        <taxon>Eukaryota</taxon>
        <taxon>Fungi</taxon>
        <taxon>Dikarya</taxon>
        <taxon>Ascomycota</taxon>
        <taxon>Pezizomycotina</taxon>
        <taxon>Eurotiomycetes</taxon>
        <taxon>Eurotiomycetidae</taxon>
        <taxon>Onygenales</taxon>
        <taxon>Ajellomycetaceae</taxon>
        <taxon>Paracoccidioides</taxon>
    </lineage>
</organism>
<feature type="chain" id="PRO_0000413267" description="Glutamyl-tRNA(Gln) amidotransferase subunit B, mitochondrial">
    <location>
        <begin position="1"/>
        <end position="602"/>
    </location>
</feature>